<sequence>MAHSS</sequence>
<evidence type="ECO:0000250" key="1"/>
<evidence type="ECO:0000305" key="2"/>
<name>BIOB_CITFR</name>
<feature type="chain" id="PRO_0000185550" description="Biotin synthase">
    <location>
        <begin position="1"/>
        <end position="5" status="greater than"/>
    </location>
</feature>
<feature type="non-terminal residue">
    <location>
        <position position="5"/>
    </location>
</feature>
<organism>
    <name type="scientific">Citrobacter freundii</name>
    <dbReference type="NCBI Taxonomy" id="546"/>
    <lineage>
        <taxon>Bacteria</taxon>
        <taxon>Pseudomonadati</taxon>
        <taxon>Pseudomonadota</taxon>
        <taxon>Gammaproteobacteria</taxon>
        <taxon>Enterobacterales</taxon>
        <taxon>Enterobacteriaceae</taxon>
        <taxon>Citrobacter</taxon>
        <taxon>Citrobacter freundii complex</taxon>
    </lineage>
</organism>
<accession>P12997</accession>
<proteinExistence type="inferred from homology"/>
<keyword id="KW-0001">2Fe-2S</keyword>
<keyword id="KW-0004">4Fe-4S</keyword>
<keyword id="KW-0093">Biotin biosynthesis</keyword>
<keyword id="KW-0408">Iron</keyword>
<keyword id="KW-0411">Iron-sulfur</keyword>
<keyword id="KW-0479">Metal-binding</keyword>
<keyword id="KW-0949">S-adenosyl-L-methionine</keyword>
<keyword id="KW-0808">Transferase</keyword>
<reference key="1">
    <citation type="journal article" date="1988" name="Gene">
        <title>Transcriptional regulation and gene arrangement of Escherichia coli, Citrobacter freundii and Salmonella typhimurium biotin operons.</title>
        <authorList>
            <person name="Shiuan D."/>
            <person name="Campbell A."/>
        </authorList>
    </citation>
    <scope>NUCLEOTIDE SEQUENCE [GENOMIC DNA]</scope>
</reference>
<comment type="function">
    <text evidence="1">Catalyzes the conversion of dethiobiotin (DTB) to biotin by the insertion of a sulfur atom into dethiobiotin via a radical-based mechanism.</text>
</comment>
<comment type="catalytic activity">
    <reaction>
        <text>(4R,5S)-dethiobiotin + (sulfur carrier)-SH + 2 reduced [2Fe-2S]-[ferredoxin] + 2 S-adenosyl-L-methionine = (sulfur carrier)-H + biotin + 2 5'-deoxyadenosine + 2 L-methionine + 2 oxidized [2Fe-2S]-[ferredoxin]</text>
        <dbReference type="Rhea" id="RHEA:22060"/>
        <dbReference type="Rhea" id="RHEA-COMP:10000"/>
        <dbReference type="Rhea" id="RHEA-COMP:10001"/>
        <dbReference type="Rhea" id="RHEA-COMP:14737"/>
        <dbReference type="Rhea" id="RHEA-COMP:14739"/>
        <dbReference type="ChEBI" id="CHEBI:17319"/>
        <dbReference type="ChEBI" id="CHEBI:29917"/>
        <dbReference type="ChEBI" id="CHEBI:33737"/>
        <dbReference type="ChEBI" id="CHEBI:33738"/>
        <dbReference type="ChEBI" id="CHEBI:57586"/>
        <dbReference type="ChEBI" id="CHEBI:57844"/>
        <dbReference type="ChEBI" id="CHEBI:59789"/>
        <dbReference type="ChEBI" id="CHEBI:64428"/>
        <dbReference type="ChEBI" id="CHEBI:149473"/>
        <dbReference type="EC" id="2.8.1.6"/>
    </reaction>
</comment>
<comment type="cofactor">
    <cofactor evidence="1">
        <name>[4Fe-4S] cluster</name>
        <dbReference type="ChEBI" id="CHEBI:49883"/>
    </cofactor>
    <text evidence="1">Binds 1 [4Fe-4S] cluster. The cluster is coordinated with 3 cysteines and an exchangeable S-adenosyl-L-methionine.</text>
</comment>
<comment type="cofactor">
    <cofactor evidence="1">
        <name>[2Fe-2S] cluster</name>
        <dbReference type="ChEBI" id="CHEBI:190135"/>
    </cofactor>
    <text evidence="1">Binds 1 [2Fe-2S] cluster. The cluster is coordinated with 3 cysteines and 1 arginine.</text>
</comment>
<comment type="pathway">
    <text>Cofactor biosynthesis; biotin biosynthesis; biotin from 7,8-diaminononanoate: step 2/2.</text>
</comment>
<comment type="subunit">
    <text evidence="1">Homodimer.</text>
</comment>
<comment type="similarity">
    <text evidence="2">Belongs to the radical SAM superfamily. Biotin synthase family.</text>
</comment>
<gene>
    <name type="primary">bioB</name>
</gene>
<dbReference type="EC" id="2.8.1.6"/>
<dbReference type="EMBL" id="M21922">
    <property type="status" value="NOT_ANNOTATED_CDS"/>
    <property type="molecule type" value="Genomic_DNA"/>
</dbReference>
<dbReference type="PIR" id="I40698">
    <property type="entry name" value="I40698"/>
</dbReference>
<dbReference type="UniPathway" id="UPA00078">
    <property type="reaction ID" value="UER00162"/>
</dbReference>
<dbReference type="GO" id="GO:0051537">
    <property type="term" value="F:2 iron, 2 sulfur cluster binding"/>
    <property type="evidence" value="ECO:0007669"/>
    <property type="project" value="UniProtKB-KW"/>
</dbReference>
<dbReference type="GO" id="GO:0051539">
    <property type="term" value="F:4 iron, 4 sulfur cluster binding"/>
    <property type="evidence" value="ECO:0007669"/>
    <property type="project" value="UniProtKB-KW"/>
</dbReference>
<dbReference type="GO" id="GO:0004076">
    <property type="term" value="F:biotin synthase activity"/>
    <property type="evidence" value="ECO:0007669"/>
    <property type="project" value="UniProtKB-EC"/>
</dbReference>
<dbReference type="GO" id="GO:0046872">
    <property type="term" value="F:metal ion binding"/>
    <property type="evidence" value="ECO:0007669"/>
    <property type="project" value="UniProtKB-KW"/>
</dbReference>
<dbReference type="GO" id="GO:0009102">
    <property type="term" value="P:biotin biosynthetic process"/>
    <property type="evidence" value="ECO:0007669"/>
    <property type="project" value="UniProtKB-UniPathway"/>
</dbReference>
<protein>
    <recommendedName>
        <fullName>Biotin synthase</fullName>
        <ecNumber>2.8.1.6</ecNumber>
    </recommendedName>
</protein>